<protein>
    <recommendedName>
        <fullName evidence="1">Large ribosomal subunit protein uL10</fullName>
    </recommendedName>
    <alternativeName>
        <fullName evidence="2">50S ribosomal protein L10</fullName>
    </alternativeName>
</protein>
<evidence type="ECO:0000255" key="1">
    <source>
        <dbReference type="HAMAP-Rule" id="MF_00362"/>
    </source>
</evidence>
<evidence type="ECO:0000305" key="2"/>
<organism>
    <name type="scientific">Buchnera aphidicola subsp. Acyrthosiphon pisum (strain Tuc7)</name>
    <dbReference type="NCBI Taxonomy" id="561501"/>
    <lineage>
        <taxon>Bacteria</taxon>
        <taxon>Pseudomonadati</taxon>
        <taxon>Pseudomonadota</taxon>
        <taxon>Gammaproteobacteria</taxon>
        <taxon>Enterobacterales</taxon>
        <taxon>Erwiniaceae</taxon>
        <taxon>Buchnera</taxon>
    </lineage>
</organism>
<reference key="1">
    <citation type="journal article" date="2009" name="Science">
        <title>The dynamics and time scale of ongoing genomic erosion in symbiotic bacteria.</title>
        <authorList>
            <person name="Moran N.A."/>
            <person name="McLaughlin H.J."/>
            <person name="Sorek R."/>
        </authorList>
    </citation>
    <scope>NUCLEOTIDE SEQUENCE [LARGE SCALE GENOMIC DNA]</scope>
    <source>
        <strain>Tuc7</strain>
    </source>
</reference>
<accession>B8D6V2</accession>
<proteinExistence type="inferred from homology"/>
<sequence length="165" mass="18246">MALSIHDKKIIVSKINKISNTALSAVTADLQGVCVNKINELRKSGREVGVKMSIVQNTLLSLAIKNTVFECLKKKLKGSTFIAYSMIHPGSGARLFKEFSKKNTQFKITGAAFEGKLLSILEINQLADMPTYKEAIIKLLLTWKMLIAGKLIYTLSAIKQKKETS</sequence>
<keyword id="KW-0687">Ribonucleoprotein</keyword>
<keyword id="KW-0689">Ribosomal protein</keyword>
<keyword id="KW-0694">RNA-binding</keyword>
<keyword id="KW-0699">rRNA-binding</keyword>
<name>RL10_BUCAT</name>
<dbReference type="EMBL" id="CP001158">
    <property type="protein sequence ID" value="ACL29867.1"/>
    <property type="molecule type" value="Genomic_DNA"/>
</dbReference>
<dbReference type="RefSeq" id="WP_009873997.1">
    <property type="nucleotide sequence ID" value="NC_011834.1"/>
</dbReference>
<dbReference type="KEGG" id="bau:BUAPTUC7_036"/>
<dbReference type="HOGENOM" id="CLU_092227_0_2_6"/>
<dbReference type="GO" id="GO:0015934">
    <property type="term" value="C:large ribosomal subunit"/>
    <property type="evidence" value="ECO:0007669"/>
    <property type="project" value="InterPro"/>
</dbReference>
<dbReference type="GO" id="GO:0070180">
    <property type="term" value="F:large ribosomal subunit rRNA binding"/>
    <property type="evidence" value="ECO:0007669"/>
    <property type="project" value="UniProtKB-UniRule"/>
</dbReference>
<dbReference type="GO" id="GO:0003735">
    <property type="term" value="F:structural constituent of ribosome"/>
    <property type="evidence" value="ECO:0007669"/>
    <property type="project" value="InterPro"/>
</dbReference>
<dbReference type="GO" id="GO:0006412">
    <property type="term" value="P:translation"/>
    <property type="evidence" value="ECO:0007669"/>
    <property type="project" value="UniProtKB-UniRule"/>
</dbReference>
<dbReference type="CDD" id="cd05797">
    <property type="entry name" value="Ribosomal_L10"/>
    <property type="match status" value="1"/>
</dbReference>
<dbReference type="Gene3D" id="3.30.70.1730">
    <property type="match status" value="1"/>
</dbReference>
<dbReference type="Gene3D" id="6.10.250.2350">
    <property type="match status" value="1"/>
</dbReference>
<dbReference type="HAMAP" id="MF_00362">
    <property type="entry name" value="Ribosomal_uL10"/>
    <property type="match status" value="1"/>
</dbReference>
<dbReference type="InterPro" id="IPR001790">
    <property type="entry name" value="Ribosomal_uL10"/>
</dbReference>
<dbReference type="InterPro" id="IPR043141">
    <property type="entry name" value="Ribosomal_uL10-like_sf"/>
</dbReference>
<dbReference type="InterPro" id="IPR022973">
    <property type="entry name" value="Ribosomal_uL10_bac"/>
</dbReference>
<dbReference type="InterPro" id="IPR047865">
    <property type="entry name" value="Ribosomal_uL10_bac_type"/>
</dbReference>
<dbReference type="InterPro" id="IPR002363">
    <property type="entry name" value="Ribosomal_uL10_CS_bac"/>
</dbReference>
<dbReference type="NCBIfam" id="NF000955">
    <property type="entry name" value="PRK00099.1-1"/>
    <property type="match status" value="1"/>
</dbReference>
<dbReference type="PANTHER" id="PTHR11560">
    <property type="entry name" value="39S RIBOSOMAL PROTEIN L10, MITOCHONDRIAL"/>
    <property type="match status" value="1"/>
</dbReference>
<dbReference type="Pfam" id="PF00466">
    <property type="entry name" value="Ribosomal_L10"/>
    <property type="match status" value="1"/>
</dbReference>
<dbReference type="SUPFAM" id="SSF160369">
    <property type="entry name" value="Ribosomal protein L10-like"/>
    <property type="match status" value="1"/>
</dbReference>
<dbReference type="PROSITE" id="PS01109">
    <property type="entry name" value="RIBOSOMAL_L10"/>
    <property type="match status" value="1"/>
</dbReference>
<comment type="function">
    <text evidence="1">Forms part of the ribosomal stalk, playing a central role in the interaction of the ribosome with GTP-bound translation factors.</text>
</comment>
<comment type="subunit">
    <text evidence="1">Part of the ribosomal stalk of the 50S ribosomal subunit. The N-terminus interacts with L11 and the large rRNA to form the base of the stalk. The C-terminus forms an elongated spine to which L12 dimers bind in a sequential fashion forming a multimeric L10(L12)X complex.</text>
</comment>
<comment type="similarity">
    <text evidence="1">Belongs to the universal ribosomal protein uL10 family.</text>
</comment>
<gene>
    <name evidence="1" type="primary">rplJ</name>
    <name type="ordered locus">BUAPTUC7_036</name>
</gene>
<feature type="chain" id="PRO_1000195533" description="Large ribosomal subunit protein uL10">
    <location>
        <begin position="1"/>
        <end position="165"/>
    </location>
</feature>